<protein>
    <recommendedName>
        <fullName evidence="1">Flavin-dependent thymidylate synthase</fullName>
        <shortName evidence="1">FDTS</shortName>
        <ecNumber evidence="1">2.1.1.148</ecNumber>
    </recommendedName>
    <alternativeName>
        <fullName evidence="1">FAD-dependent thymidylate synthase</fullName>
    </alternativeName>
    <alternativeName>
        <fullName evidence="1">Thymidylate synthase ThyX</fullName>
        <shortName evidence="1">TS</shortName>
        <shortName evidence="1">TSase</shortName>
    </alternativeName>
</protein>
<keyword id="KW-0274">FAD</keyword>
<keyword id="KW-0285">Flavoprotein</keyword>
<keyword id="KW-0489">Methyltransferase</keyword>
<keyword id="KW-0521">NADP</keyword>
<keyword id="KW-0545">Nucleotide biosynthesis</keyword>
<keyword id="KW-0808">Transferase</keyword>
<gene>
    <name evidence="1" type="primary">thyX</name>
    <name type="ordered locus">PYRAB13030</name>
    <name type="ORF">PAB0861</name>
</gene>
<accession>Q9UZ51</accession>
<accession>G8ZHA7</accession>
<reference key="1">
    <citation type="journal article" date="2003" name="Mol. Microbiol.">
        <title>An integrated analysis of the genome of the hyperthermophilic archaeon Pyrococcus abyssi.</title>
        <authorList>
            <person name="Cohen G.N."/>
            <person name="Barbe V."/>
            <person name="Flament D."/>
            <person name="Galperin M."/>
            <person name="Heilig R."/>
            <person name="Lecompte O."/>
            <person name="Poch O."/>
            <person name="Prieur D."/>
            <person name="Querellou J."/>
            <person name="Ripp R."/>
            <person name="Thierry J.-C."/>
            <person name="Van der Oost J."/>
            <person name="Weissenbach J."/>
            <person name="Zivanovic Y."/>
            <person name="Forterre P."/>
        </authorList>
    </citation>
    <scope>NUCLEOTIDE SEQUENCE [LARGE SCALE GENOMIC DNA]</scope>
    <source>
        <strain>GE5 / Orsay</strain>
    </source>
</reference>
<reference key="2">
    <citation type="journal article" date="2012" name="Curr. Microbiol.">
        <title>Re-annotation of two hyperthermophilic archaea Pyrococcus abyssi GE5 and Pyrococcus furiosus DSM 3638.</title>
        <authorList>
            <person name="Gao J."/>
            <person name="Wang J."/>
        </authorList>
    </citation>
    <scope>GENOME REANNOTATION</scope>
    <source>
        <strain>GE5 / Orsay</strain>
    </source>
</reference>
<organism>
    <name type="scientific">Pyrococcus abyssi (strain GE5 / Orsay)</name>
    <dbReference type="NCBI Taxonomy" id="272844"/>
    <lineage>
        <taxon>Archaea</taxon>
        <taxon>Methanobacteriati</taxon>
        <taxon>Methanobacteriota</taxon>
        <taxon>Thermococci</taxon>
        <taxon>Thermococcales</taxon>
        <taxon>Thermococcaceae</taxon>
        <taxon>Pyrococcus</taxon>
    </lineage>
</organism>
<dbReference type="EC" id="2.1.1.148" evidence="1"/>
<dbReference type="EMBL" id="AJ248287">
    <property type="protein sequence ID" value="CAB50208.1"/>
    <property type="molecule type" value="Genomic_DNA"/>
</dbReference>
<dbReference type="EMBL" id="HE613800">
    <property type="protein sequence ID" value="CCE70744.1"/>
    <property type="molecule type" value="Genomic_DNA"/>
</dbReference>
<dbReference type="PIR" id="C75039">
    <property type="entry name" value="C75039"/>
</dbReference>
<dbReference type="RefSeq" id="WP_010868418.1">
    <property type="nucleotide sequence ID" value="NC_000868.1"/>
</dbReference>
<dbReference type="SMR" id="Q9UZ51"/>
<dbReference type="STRING" id="272844.PAB0861"/>
<dbReference type="KEGG" id="pab:PAB0861"/>
<dbReference type="PATRIC" id="fig|272844.11.peg.1387"/>
<dbReference type="eggNOG" id="arCOG01883">
    <property type="taxonomic scope" value="Archaea"/>
</dbReference>
<dbReference type="HOGENOM" id="CLU_077585_0_0_2"/>
<dbReference type="OrthoDB" id="18918at2157"/>
<dbReference type="PhylomeDB" id="Q9UZ51"/>
<dbReference type="BRENDA" id="2.1.1.148">
    <property type="organism ID" value="5242"/>
</dbReference>
<dbReference type="UniPathway" id="UPA00575"/>
<dbReference type="Proteomes" id="UP000000810">
    <property type="component" value="Chromosome"/>
</dbReference>
<dbReference type="Proteomes" id="UP000009139">
    <property type="component" value="Chromosome"/>
</dbReference>
<dbReference type="GO" id="GO:0050660">
    <property type="term" value="F:flavin adenine dinucleotide binding"/>
    <property type="evidence" value="ECO:0007669"/>
    <property type="project" value="InterPro"/>
</dbReference>
<dbReference type="GO" id="GO:0070402">
    <property type="term" value="F:NADPH binding"/>
    <property type="evidence" value="ECO:0007669"/>
    <property type="project" value="TreeGrafter"/>
</dbReference>
<dbReference type="GO" id="GO:0050797">
    <property type="term" value="F:thymidylate synthase (FAD) activity"/>
    <property type="evidence" value="ECO:0007669"/>
    <property type="project" value="UniProtKB-UniRule"/>
</dbReference>
<dbReference type="GO" id="GO:0004799">
    <property type="term" value="F:thymidylate synthase activity"/>
    <property type="evidence" value="ECO:0007669"/>
    <property type="project" value="TreeGrafter"/>
</dbReference>
<dbReference type="GO" id="GO:0006231">
    <property type="term" value="P:dTMP biosynthetic process"/>
    <property type="evidence" value="ECO:0007669"/>
    <property type="project" value="UniProtKB-UniRule"/>
</dbReference>
<dbReference type="GO" id="GO:0006235">
    <property type="term" value="P:dTTP biosynthetic process"/>
    <property type="evidence" value="ECO:0007669"/>
    <property type="project" value="UniProtKB-UniRule"/>
</dbReference>
<dbReference type="GO" id="GO:0032259">
    <property type="term" value="P:methylation"/>
    <property type="evidence" value="ECO:0007669"/>
    <property type="project" value="UniProtKB-KW"/>
</dbReference>
<dbReference type="CDD" id="cd20175">
    <property type="entry name" value="ThyX"/>
    <property type="match status" value="1"/>
</dbReference>
<dbReference type="Gene3D" id="3.30.1360.170">
    <property type="match status" value="1"/>
</dbReference>
<dbReference type="HAMAP" id="MF_01408">
    <property type="entry name" value="ThyX"/>
    <property type="match status" value="1"/>
</dbReference>
<dbReference type="InterPro" id="IPR003669">
    <property type="entry name" value="Thymidylate_synthase_ThyX"/>
</dbReference>
<dbReference type="InterPro" id="IPR036098">
    <property type="entry name" value="Thymidylate_synthase_ThyX_sf"/>
</dbReference>
<dbReference type="NCBIfam" id="TIGR02170">
    <property type="entry name" value="thyX"/>
    <property type="match status" value="1"/>
</dbReference>
<dbReference type="PANTHER" id="PTHR34934">
    <property type="entry name" value="FLAVIN-DEPENDENT THYMIDYLATE SYNTHASE"/>
    <property type="match status" value="1"/>
</dbReference>
<dbReference type="PANTHER" id="PTHR34934:SF1">
    <property type="entry name" value="FLAVIN-DEPENDENT THYMIDYLATE SYNTHASE"/>
    <property type="match status" value="1"/>
</dbReference>
<dbReference type="Pfam" id="PF02511">
    <property type="entry name" value="Thy1"/>
    <property type="match status" value="1"/>
</dbReference>
<dbReference type="SUPFAM" id="SSF69796">
    <property type="entry name" value="Thymidylate synthase-complementing protein Thy1"/>
    <property type="match status" value="1"/>
</dbReference>
<dbReference type="PROSITE" id="PS51331">
    <property type="entry name" value="THYX"/>
    <property type="match status" value="1"/>
</dbReference>
<feature type="chain" id="PRO_0000175591" description="Flavin-dependent thymidylate synthase">
    <location>
        <begin position="1"/>
        <end position="244"/>
    </location>
</feature>
<feature type="domain" description="ThyX" evidence="2">
    <location>
        <begin position="2"/>
        <end position="207"/>
    </location>
</feature>
<feature type="short sequence motif" description="ThyX motif" evidence="1">
    <location>
        <begin position="80"/>
        <end position="90"/>
    </location>
</feature>
<feature type="active site" description="Involved in ionization of N3 of dUMP, leading to its activation" evidence="1">
    <location>
        <position position="173"/>
    </location>
</feature>
<feature type="binding site" evidence="1">
    <location>
        <position position="56"/>
    </location>
    <ligand>
        <name>FAD</name>
        <dbReference type="ChEBI" id="CHEBI:57692"/>
        <note>ligand shared between neighboring subunits</note>
    </ligand>
</feature>
<feature type="binding site" evidence="1">
    <location>
        <begin position="77"/>
        <end position="80"/>
    </location>
    <ligand>
        <name>dUMP</name>
        <dbReference type="ChEBI" id="CHEBI:246422"/>
        <note>ligand shared between dimeric partners</note>
    </ligand>
</feature>
<feature type="binding site" evidence="1">
    <location>
        <begin position="80"/>
        <end position="82"/>
    </location>
    <ligand>
        <name>FAD</name>
        <dbReference type="ChEBI" id="CHEBI:57692"/>
        <note>ligand shared between neighboring subunits</note>
    </ligand>
</feature>
<feature type="binding site" description="in other chain" evidence="1">
    <location>
        <begin position="88"/>
        <end position="92"/>
    </location>
    <ligand>
        <name>dUMP</name>
        <dbReference type="ChEBI" id="CHEBI:246422"/>
        <note>ligand shared between dimeric partners</note>
    </ligand>
</feature>
<feature type="binding site" evidence="1">
    <location>
        <position position="88"/>
    </location>
    <ligand>
        <name>FAD</name>
        <dbReference type="ChEBI" id="CHEBI:57692"/>
        <note>ligand shared between neighboring subunits</note>
    </ligand>
</feature>
<feature type="binding site" description="in other chain" evidence="1">
    <location>
        <position position="146"/>
    </location>
    <ligand>
        <name>dUMP</name>
        <dbReference type="ChEBI" id="CHEBI:246422"/>
        <note>ligand shared between dimeric partners</note>
    </ligand>
</feature>
<feature type="binding site" evidence="1">
    <location>
        <begin position="162"/>
        <end position="164"/>
    </location>
    <ligand>
        <name>FAD</name>
        <dbReference type="ChEBI" id="CHEBI:57692"/>
        <note>ligand shared between neighboring subunits</note>
    </ligand>
</feature>
<feature type="binding site" evidence="1">
    <location>
        <position position="168"/>
    </location>
    <ligand>
        <name>FAD</name>
        <dbReference type="ChEBI" id="CHEBI:57692"/>
        <note>ligand shared between neighboring subunits</note>
    </ligand>
</feature>
<feature type="binding site" evidence="1">
    <location>
        <position position="173"/>
    </location>
    <ligand>
        <name>dUMP</name>
        <dbReference type="ChEBI" id="CHEBI:246422"/>
        <note>ligand shared between dimeric partners</note>
    </ligand>
</feature>
<evidence type="ECO:0000255" key="1">
    <source>
        <dbReference type="HAMAP-Rule" id="MF_01408"/>
    </source>
</evidence>
<evidence type="ECO:0000255" key="2">
    <source>
        <dbReference type="PROSITE-ProRule" id="PRU00661"/>
    </source>
</evidence>
<sequence length="244" mass="29193">MVRVTLVNYTRRPLETITWAALVSYWDEWSTESFEKINEDDVKAHLPRILGYGHESILEHATFTFSIEGCSRVCTHQLVRHRIASYTQQSQRYIVLNEENVEETFVIPESIKKDRELYEKWKKAMAETIKLYKESLKRGIHQEDARFILPQAVRSKIVVTMNLRELKHFFGLRLCERAQWEIREVAWKMLEEIAKREELRPIIKWAKLGPRCIQLGYCPERELMPPGCFKRTRERWMKLLEKPL</sequence>
<comment type="function">
    <text evidence="1">Catalyzes the reductive methylation of 2'-deoxyuridine-5'-monophosphate (dUMP) to 2'-deoxythymidine-5'-monophosphate (dTMP) while utilizing 5,10-methylenetetrahydrofolate (mTHF) as the methyl donor, and NADPH and FADH(2) as the reductant.</text>
</comment>
<comment type="catalytic activity">
    <reaction evidence="1">
        <text>dUMP + (6R)-5,10-methylene-5,6,7,8-tetrahydrofolate + NADPH + H(+) = dTMP + (6S)-5,6,7,8-tetrahydrofolate + NADP(+)</text>
        <dbReference type="Rhea" id="RHEA:29043"/>
        <dbReference type="ChEBI" id="CHEBI:15378"/>
        <dbReference type="ChEBI" id="CHEBI:15636"/>
        <dbReference type="ChEBI" id="CHEBI:57453"/>
        <dbReference type="ChEBI" id="CHEBI:57783"/>
        <dbReference type="ChEBI" id="CHEBI:58349"/>
        <dbReference type="ChEBI" id="CHEBI:63528"/>
        <dbReference type="ChEBI" id="CHEBI:246422"/>
        <dbReference type="EC" id="2.1.1.148"/>
    </reaction>
</comment>
<comment type="cofactor">
    <cofactor evidence="1">
        <name>FAD</name>
        <dbReference type="ChEBI" id="CHEBI:57692"/>
    </cofactor>
    <text evidence="1">Binds 4 FAD per tetramer. Each FAD binding site is formed by three monomers.</text>
</comment>
<comment type="pathway">
    <text evidence="1">Pyrimidine metabolism; dTTP biosynthesis.</text>
</comment>
<comment type="subunit">
    <text evidence="1">Homotetramer.</text>
</comment>
<comment type="similarity">
    <text evidence="1">Belongs to the thymidylate synthase ThyX family.</text>
</comment>
<name>THYX_PYRAB</name>
<proteinExistence type="inferred from homology"/>